<proteinExistence type="inferred from homology"/>
<comment type="function">
    <text evidence="1">Catalyzes the NADPH-dependent reduction of 7-cyano-7-deazaguanine (preQ0) to 7-aminomethyl-7-deazaguanine (preQ1).</text>
</comment>
<comment type="catalytic activity">
    <reaction evidence="1">
        <text>7-aminomethyl-7-carbaguanine + 2 NADP(+) = 7-cyano-7-deazaguanine + 2 NADPH + 3 H(+)</text>
        <dbReference type="Rhea" id="RHEA:13409"/>
        <dbReference type="ChEBI" id="CHEBI:15378"/>
        <dbReference type="ChEBI" id="CHEBI:45075"/>
        <dbReference type="ChEBI" id="CHEBI:57783"/>
        <dbReference type="ChEBI" id="CHEBI:58349"/>
        <dbReference type="ChEBI" id="CHEBI:58703"/>
        <dbReference type="EC" id="1.7.1.13"/>
    </reaction>
</comment>
<comment type="pathway">
    <text evidence="1">tRNA modification; tRNA-queuosine biosynthesis.</text>
</comment>
<comment type="subunit">
    <text evidence="1">Homodimer.</text>
</comment>
<comment type="subcellular location">
    <subcellularLocation>
        <location evidence="1">Cytoplasm</location>
    </subcellularLocation>
</comment>
<comment type="similarity">
    <text evidence="1">Belongs to the GTP cyclohydrolase I family. QueF type 2 subfamily.</text>
</comment>
<keyword id="KW-0963">Cytoplasm</keyword>
<keyword id="KW-0521">NADP</keyword>
<keyword id="KW-0560">Oxidoreductase</keyword>
<keyword id="KW-0671">Queuosine biosynthesis</keyword>
<sequence length="274" mass="30401">MNPEHSPLGKATVYANQYDASLLFPIPRAGAREQIGIGAPLPFFGTDIWNAYELSWLNARGKPQIAIATFYVPAESPNIVESKSFKLYLGSFAQTAFESADAVRDALKRDVSAACGASVTVRLATPAEFRKLQMDELDGLSLDRLDLDAHVYETDPSFLTASHDEAPVEETLVTDLLKSNCPVTGQPDWGSVQIHYVGAPIDHAGLLRYIISFRNHTGFHEQCVERIFVDILRACQPVKLAVYARYTRRGGLDINPFRTNYNQPMPDNARTARQ</sequence>
<protein>
    <recommendedName>
        <fullName evidence="1">NADPH-dependent 7-cyano-7-deazaguanine reductase</fullName>
        <ecNumber evidence="1">1.7.1.13</ecNumber>
    </recommendedName>
    <alternativeName>
        <fullName evidence="1">7-cyano-7-carbaguanine reductase</fullName>
    </alternativeName>
    <alternativeName>
        <fullName evidence="1">NADPH-dependent nitrile oxidoreductase</fullName>
    </alternativeName>
    <alternativeName>
        <fullName evidence="1">PreQ(0) reductase</fullName>
    </alternativeName>
</protein>
<reference key="1">
    <citation type="journal article" date="2010" name="Genome Biol. Evol.">
        <title>Continuing evolution of Burkholderia mallei through genome reduction and large-scale rearrangements.</title>
        <authorList>
            <person name="Losada L."/>
            <person name="Ronning C.M."/>
            <person name="DeShazer D."/>
            <person name="Woods D."/>
            <person name="Fedorova N."/>
            <person name="Kim H.S."/>
            <person name="Shabalina S.A."/>
            <person name="Pearson T.R."/>
            <person name="Brinkac L."/>
            <person name="Tan P."/>
            <person name="Nandi T."/>
            <person name="Crabtree J."/>
            <person name="Badger J."/>
            <person name="Beckstrom-Sternberg S."/>
            <person name="Saqib M."/>
            <person name="Schutzer S.E."/>
            <person name="Keim P."/>
            <person name="Nierman W.C."/>
        </authorList>
    </citation>
    <scope>NUCLEOTIDE SEQUENCE [LARGE SCALE GENOMIC DNA]</scope>
    <source>
        <strain>NCTC 10247</strain>
    </source>
</reference>
<evidence type="ECO:0000255" key="1">
    <source>
        <dbReference type="HAMAP-Rule" id="MF_00817"/>
    </source>
</evidence>
<name>QUEF_BURM7</name>
<gene>
    <name evidence="1" type="primary">queF</name>
    <name type="ordered locus">BMA10247_2391</name>
</gene>
<feature type="chain" id="PRO_1000062330" description="NADPH-dependent 7-cyano-7-deazaguanine reductase">
    <location>
        <begin position="1"/>
        <end position="274"/>
    </location>
</feature>
<feature type="active site" description="Thioimide intermediate" evidence="1">
    <location>
        <position position="181"/>
    </location>
</feature>
<feature type="active site" description="Proton donor" evidence="1">
    <location>
        <position position="188"/>
    </location>
</feature>
<feature type="binding site" evidence="1">
    <location>
        <begin position="80"/>
        <end position="82"/>
    </location>
    <ligand>
        <name>substrate</name>
    </ligand>
</feature>
<feature type="binding site" evidence="1">
    <location>
        <begin position="82"/>
        <end position="83"/>
    </location>
    <ligand>
        <name>NADPH</name>
        <dbReference type="ChEBI" id="CHEBI:57783"/>
    </ligand>
</feature>
<feature type="binding site" evidence="1">
    <location>
        <begin position="220"/>
        <end position="221"/>
    </location>
    <ligand>
        <name>substrate</name>
    </ligand>
</feature>
<feature type="binding site" evidence="1">
    <location>
        <begin position="249"/>
        <end position="250"/>
    </location>
    <ligand>
        <name>NADPH</name>
        <dbReference type="ChEBI" id="CHEBI:57783"/>
    </ligand>
</feature>
<accession>A3MNT1</accession>
<dbReference type="EC" id="1.7.1.13" evidence="1"/>
<dbReference type="EMBL" id="CP000548">
    <property type="protein sequence ID" value="ABO04822.1"/>
    <property type="molecule type" value="Genomic_DNA"/>
</dbReference>
<dbReference type="RefSeq" id="WP_004189061.1">
    <property type="nucleotide sequence ID" value="NZ_CP007802.1"/>
</dbReference>
<dbReference type="SMR" id="A3MNT1"/>
<dbReference type="GeneID" id="92977957"/>
<dbReference type="KEGG" id="bmaz:BM44_897"/>
<dbReference type="KEGG" id="bmn:BMA10247_2391"/>
<dbReference type="PATRIC" id="fig|320389.8.peg.999"/>
<dbReference type="UniPathway" id="UPA00392"/>
<dbReference type="GO" id="GO:0005737">
    <property type="term" value="C:cytoplasm"/>
    <property type="evidence" value="ECO:0007669"/>
    <property type="project" value="UniProtKB-SubCell"/>
</dbReference>
<dbReference type="GO" id="GO:0033739">
    <property type="term" value="F:preQ1 synthase activity"/>
    <property type="evidence" value="ECO:0007669"/>
    <property type="project" value="UniProtKB-UniRule"/>
</dbReference>
<dbReference type="GO" id="GO:0008616">
    <property type="term" value="P:queuosine biosynthetic process"/>
    <property type="evidence" value="ECO:0007669"/>
    <property type="project" value="UniProtKB-UniRule"/>
</dbReference>
<dbReference type="GO" id="GO:0006400">
    <property type="term" value="P:tRNA modification"/>
    <property type="evidence" value="ECO:0007669"/>
    <property type="project" value="UniProtKB-UniRule"/>
</dbReference>
<dbReference type="Gene3D" id="3.30.1130.10">
    <property type="match status" value="2"/>
</dbReference>
<dbReference type="HAMAP" id="MF_00817">
    <property type="entry name" value="QueF_type2"/>
    <property type="match status" value="1"/>
</dbReference>
<dbReference type="InterPro" id="IPR043133">
    <property type="entry name" value="GTP-CH-I_C/QueF"/>
</dbReference>
<dbReference type="InterPro" id="IPR050084">
    <property type="entry name" value="NADPH_dep_7-cyano-7-deazaG_red"/>
</dbReference>
<dbReference type="InterPro" id="IPR029500">
    <property type="entry name" value="QueF"/>
</dbReference>
<dbReference type="InterPro" id="IPR029139">
    <property type="entry name" value="QueF_N"/>
</dbReference>
<dbReference type="InterPro" id="IPR016428">
    <property type="entry name" value="QueF_type2"/>
</dbReference>
<dbReference type="NCBIfam" id="TIGR03138">
    <property type="entry name" value="QueF"/>
    <property type="match status" value="1"/>
</dbReference>
<dbReference type="PANTHER" id="PTHR34354">
    <property type="entry name" value="NADPH-DEPENDENT 7-CYANO-7-DEAZAGUANINE REDUCTASE"/>
    <property type="match status" value="1"/>
</dbReference>
<dbReference type="PANTHER" id="PTHR34354:SF1">
    <property type="entry name" value="NADPH-DEPENDENT 7-CYANO-7-DEAZAGUANINE REDUCTASE"/>
    <property type="match status" value="1"/>
</dbReference>
<dbReference type="Pfam" id="PF14489">
    <property type="entry name" value="QueF"/>
    <property type="match status" value="1"/>
</dbReference>
<dbReference type="Pfam" id="PF14819">
    <property type="entry name" value="QueF_N"/>
    <property type="match status" value="1"/>
</dbReference>
<dbReference type="PIRSF" id="PIRSF004750">
    <property type="entry name" value="Nitrile_oxidored_YqcD_prd"/>
    <property type="match status" value="1"/>
</dbReference>
<dbReference type="SUPFAM" id="SSF55620">
    <property type="entry name" value="Tetrahydrobiopterin biosynthesis enzymes-like"/>
    <property type="match status" value="1"/>
</dbReference>
<organism>
    <name type="scientific">Burkholderia mallei (strain NCTC 10247)</name>
    <dbReference type="NCBI Taxonomy" id="320389"/>
    <lineage>
        <taxon>Bacteria</taxon>
        <taxon>Pseudomonadati</taxon>
        <taxon>Pseudomonadota</taxon>
        <taxon>Betaproteobacteria</taxon>
        <taxon>Burkholderiales</taxon>
        <taxon>Burkholderiaceae</taxon>
        <taxon>Burkholderia</taxon>
        <taxon>pseudomallei group</taxon>
    </lineage>
</organism>